<sequence length="416" mass="46580">MEAKPLASSSSEPNMISPSSNIKPKLKDEDYMELVCENGQILAKIRRPKNNGSFQKQRRQSLLDLYETEYSEGFKKNIKILGDTQVVPVSQSKPQQDKETNEQMNNNKKKLKSSKIEFERNVSKSNKCVESSTLIDVSAKGPKNVEVTTAPPDEQSAAVGRSTELYFASSSKFSRGTSRDLSCCSLKRKYGDIEEEESTYLSNNSDDESDDAKTQVHARTRKPVTKRKRSTEVHKLYERKRRDEFNKKMRALQDLLPNCYKDDKASLLDEAIKYMRTLQLQVQMMSMGNGLIRPPTMLPMGHYSPMGLGMHMGAAATPTSIPQFLPMNVQATGFPGMNNAPPQMLSFLNHPSGLIPNTPIFSPLENCSQPFVVPSCVSQTQATSFTQFPKSASASNLEDAMQYRGSNGFSYYRSPN</sequence>
<gene>
    <name evidence="12 15" type="primary">PIL1</name>
    <name evidence="13" type="synonym">BHLH124</name>
    <name evidence="14" type="synonym">EN110</name>
    <name evidence="17" type="ordered locus">At2g46970</name>
    <name evidence="18" type="ORF">F14M4.20</name>
</gene>
<keyword id="KW-0175">Coiled coil</keyword>
<keyword id="KW-0238">DNA-binding</keyword>
<keyword id="KW-0539">Nucleus</keyword>
<keyword id="KW-1185">Reference proteome</keyword>
<keyword id="KW-0804">Transcription</keyword>
<keyword id="KW-0805">Transcription regulation</keyword>
<evidence type="ECO:0000250" key="1">
    <source>
        <dbReference type="UniProtKB" id="Q8GZM7"/>
    </source>
</evidence>
<evidence type="ECO:0000255" key="2"/>
<evidence type="ECO:0000255" key="3">
    <source>
        <dbReference type="PROSITE-ProRule" id="PRU00981"/>
    </source>
</evidence>
<evidence type="ECO:0000256" key="4">
    <source>
        <dbReference type="SAM" id="MobiDB-lite"/>
    </source>
</evidence>
<evidence type="ECO:0000269" key="5">
    <source>
    </source>
</evidence>
<evidence type="ECO:0000269" key="6">
    <source>
    </source>
</evidence>
<evidence type="ECO:0000269" key="7">
    <source>
    </source>
</evidence>
<evidence type="ECO:0000269" key="8">
    <source>
    </source>
</evidence>
<evidence type="ECO:0000269" key="9">
    <source>
    </source>
</evidence>
<evidence type="ECO:0000269" key="10">
    <source>
    </source>
</evidence>
<evidence type="ECO:0000269" key="11">
    <source>
    </source>
</evidence>
<evidence type="ECO:0000303" key="12">
    <source>
    </source>
</evidence>
<evidence type="ECO:0000303" key="13">
    <source>
    </source>
</evidence>
<evidence type="ECO:0000303" key="14">
    <source>
    </source>
</evidence>
<evidence type="ECO:0000303" key="15">
    <source>
    </source>
</evidence>
<evidence type="ECO:0000305" key="16"/>
<evidence type="ECO:0000312" key="17">
    <source>
        <dbReference type="Araport" id="AT2G46970"/>
    </source>
</evidence>
<evidence type="ECO:0000312" key="18">
    <source>
        <dbReference type="EMBL" id="AAC34226.1"/>
    </source>
</evidence>
<protein>
    <recommendedName>
        <fullName evidence="12 15">Transcription factor PIL1</fullName>
    </recommendedName>
    <alternativeName>
        <fullName evidence="13">Basic helix-loop-helix protein 124</fullName>
        <shortName evidence="13">AtbHLH124</shortName>
        <shortName evidence="13">bHLH 124</shortName>
    </alternativeName>
    <alternativeName>
        <fullName evidence="12 15">Phytochrome-interacting factor 3-like 1</fullName>
    </alternativeName>
    <alternativeName>
        <fullName evidence="14">Transcription factor EN 110</fullName>
    </alternativeName>
    <alternativeName>
        <fullName evidence="13">bHLH transcription factor bHLH124</fullName>
    </alternativeName>
</protein>
<dbReference type="EMBL" id="AB090873">
    <property type="protein sequence ID" value="BAC10689.1"/>
    <property type="molecule type" value="Transcribed_RNA"/>
</dbReference>
<dbReference type="EMBL" id="AC004411">
    <property type="protein sequence ID" value="AAC34226.1"/>
    <property type="status" value="ALT_SEQ"/>
    <property type="molecule type" value="Genomic_DNA"/>
</dbReference>
<dbReference type="EMBL" id="CP002685">
    <property type="protein sequence ID" value="AEC10779.1"/>
    <property type="molecule type" value="Genomic_DNA"/>
</dbReference>
<dbReference type="EMBL" id="AY219127">
    <property type="protein sequence ID" value="AAO37214.1"/>
    <property type="molecule type" value="mRNA"/>
</dbReference>
<dbReference type="EMBL" id="AY954840">
    <property type="protein sequence ID" value="AAX55166.1"/>
    <property type="molecule type" value="mRNA"/>
</dbReference>
<dbReference type="PIR" id="T02190">
    <property type="entry name" value="T02190"/>
</dbReference>
<dbReference type="RefSeq" id="NP_182220.2">
    <property type="nucleotide sequence ID" value="NM_130265.4"/>
</dbReference>
<dbReference type="SMR" id="Q8L5W8"/>
<dbReference type="BioGRID" id="4646">
    <property type="interactions" value="19"/>
</dbReference>
<dbReference type="FunCoup" id="Q8L5W8">
    <property type="interactions" value="18"/>
</dbReference>
<dbReference type="IntAct" id="Q8L5W8">
    <property type="interactions" value="17"/>
</dbReference>
<dbReference type="STRING" id="3702.Q8L5W8"/>
<dbReference type="PaxDb" id="3702-AT2G46970.1"/>
<dbReference type="EnsemblPlants" id="AT2G46970.1">
    <property type="protein sequence ID" value="AT2G46970.1"/>
    <property type="gene ID" value="AT2G46970"/>
</dbReference>
<dbReference type="GeneID" id="819311"/>
<dbReference type="Gramene" id="AT2G46970.1">
    <property type="protein sequence ID" value="AT2G46970.1"/>
    <property type="gene ID" value="AT2G46970"/>
</dbReference>
<dbReference type="KEGG" id="ath:AT2G46970"/>
<dbReference type="Araport" id="AT2G46970"/>
<dbReference type="TAIR" id="AT2G46970">
    <property type="gene designation" value="PIL1"/>
</dbReference>
<dbReference type="eggNOG" id="ENOG502QV9I">
    <property type="taxonomic scope" value="Eukaryota"/>
</dbReference>
<dbReference type="HOGENOM" id="CLU_053768_0_0_1"/>
<dbReference type="InParanoid" id="Q8L5W8"/>
<dbReference type="OrthoDB" id="690068at2759"/>
<dbReference type="PhylomeDB" id="Q8L5W8"/>
<dbReference type="PRO" id="PR:Q8L5W8"/>
<dbReference type="Proteomes" id="UP000006548">
    <property type="component" value="Chromosome 2"/>
</dbReference>
<dbReference type="ExpressionAtlas" id="Q8L5W8">
    <property type="expression patterns" value="baseline and differential"/>
</dbReference>
<dbReference type="GO" id="GO:0005634">
    <property type="term" value="C:nucleus"/>
    <property type="evidence" value="ECO:0007669"/>
    <property type="project" value="UniProtKB-SubCell"/>
</dbReference>
<dbReference type="GO" id="GO:0003677">
    <property type="term" value="F:DNA binding"/>
    <property type="evidence" value="ECO:0007669"/>
    <property type="project" value="UniProtKB-KW"/>
</dbReference>
<dbReference type="GO" id="GO:0003700">
    <property type="term" value="F:DNA-binding transcription factor activity"/>
    <property type="evidence" value="ECO:0000250"/>
    <property type="project" value="TAIR"/>
</dbReference>
<dbReference type="GO" id="GO:0046983">
    <property type="term" value="F:protein dimerization activity"/>
    <property type="evidence" value="ECO:0007669"/>
    <property type="project" value="InterPro"/>
</dbReference>
<dbReference type="GO" id="GO:1990110">
    <property type="term" value="P:callus formation"/>
    <property type="evidence" value="ECO:0000315"/>
    <property type="project" value="TAIR"/>
</dbReference>
<dbReference type="GO" id="GO:0010017">
    <property type="term" value="P:red or far-red light signaling pathway"/>
    <property type="evidence" value="ECO:0000315"/>
    <property type="project" value="TAIR"/>
</dbReference>
<dbReference type="GO" id="GO:0006355">
    <property type="term" value="P:regulation of DNA-templated transcription"/>
    <property type="evidence" value="ECO:0000304"/>
    <property type="project" value="TAIR"/>
</dbReference>
<dbReference type="GO" id="GO:0009641">
    <property type="term" value="P:shade avoidance"/>
    <property type="evidence" value="ECO:0000270"/>
    <property type="project" value="TAIR"/>
</dbReference>
<dbReference type="CDD" id="cd11445">
    <property type="entry name" value="bHLH_AtPIF_like"/>
    <property type="match status" value="1"/>
</dbReference>
<dbReference type="FunFam" id="4.10.280.10:FF:000069">
    <property type="entry name" value="Transcription factor PIF7"/>
    <property type="match status" value="1"/>
</dbReference>
<dbReference type="Gene3D" id="4.10.280.10">
    <property type="entry name" value="Helix-loop-helix DNA-binding domain"/>
    <property type="match status" value="1"/>
</dbReference>
<dbReference type="InterPro" id="IPR011598">
    <property type="entry name" value="bHLH_dom"/>
</dbReference>
<dbReference type="InterPro" id="IPR036638">
    <property type="entry name" value="HLH_DNA-bd_sf"/>
</dbReference>
<dbReference type="InterPro" id="IPR047265">
    <property type="entry name" value="PIF1-like_bHLH"/>
</dbReference>
<dbReference type="InterPro" id="IPR044273">
    <property type="entry name" value="PIF3-like"/>
</dbReference>
<dbReference type="PANTHER" id="PTHR46807">
    <property type="entry name" value="TRANSCRIPTION FACTOR PIF3"/>
    <property type="match status" value="1"/>
</dbReference>
<dbReference type="PANTHER" id="PTHR46807:SF1">
    <property type="entry name" value="TRANSCRIPTION FACTOR PIF3"/>
    <property type="match status" value="1"/>
</dbReference>
<dbReference type="Pfam" id="PF00010">
    <property type="entry name" value="HLH"/>
    <property type="match status" value="1"/>
</dbReference>
<dbReference type="SMART" id="SM00353">
    <property type="entry name" value="HLH"/>
    <property type="match status" value="1"/>
</dbReference>
<dbReference type="SUPFAM" id="SSF47459">
    <property type="entry name" value="HLH, helix-loop-helix DNA-binding domain"/>
    <property type="match status" value="1"/>
</dbReference>
<dbReference type="PROSITE" id="PS50888">
    <property type="entry name" value="BHLH"/>
    <property type="match status" value="1"/>
</dbReference>
<comment type="function">
    <text evidence="7 8 9">Transcription factor. Involved in responses to transient and long-term shade. Required for the light-mediated inhibition of hypocotyl elongation. Necessary for rapid light-induced expression of the photomorphogenesis- and circadian-related gene APRR9. Seems to play a role in multiple PHYB responses, such as flowering transition and petiole elongation.</text>
</comment>
<comment type="subunit">
    <text evidence="1 5 6 11">Homodimer (By similarity). Interacts with APRR1/TOC1 (PubMed:11828023, PubMed:12826627). Associates to PTAC12/HMR/PAP5 which acts as a transcriptional coactivator (PubMed:25944101).</text>
</comment>
<comment type="interaction">
    <interactant intactId="EBI-630752">
        <id>Q8L5W8</id>
    </interactant>
    <interactant intactId="EBI-618423">
        <id>Q9LKL2</id>
        <label>APRR1</label>
    </interactant>
    <organismsDiffer>false</organismsDiffer>
    <experiments>3</experiments>
</comment>
<comment type="interaction">
    <interactant intactId="EBI-630752">
        <id>Q8L5W8</id>
    </interactant>
    <interactant intactId="EBI-15193531">
        <id>Q5XVH0</id>
        <label>BHLH109</label>
    </interactant>
    <organismsDiffer>false</organismsDiffer>
    <experiments>3</experiments>
</comment>
<comment type="interaction">
    <interactant intactId="EBI-630752">
        <id>Q8L5W8</id>
    </interactant>
    <interactant intactId="EBI-15193025">
        <id>Q9LXU1</id>
        <label>NOT9B</label>
    </interactant>
    <organismsDiffer>false</organismsDiffer>
    <experiments>3</experiments>
</comment>
<comment type="subcellular location">
    <subcellularLocation>
        <location evidence="3 9">Nucleus</location>
    </subcellularLocation>
</comment>
<comment type="tissue specificity">
    <text evidence="6 10">Mainly expressed in stems, fruits and flowers and, to a lower extent, in leaves, seedlings and roots (PubMed:23708772). Accumulates in etiolated seedlings (PubMed:12826627).</text>
</comment>
<comment type="induction">
    <text evidence="7 8 9">Expressed with a circadian rhythm showing peaks during the light period. Up-regulated by simulated shade in light-grown plants, in a phytochrome-dependent manner; low red/far-red ratio (R/FR) light, but repressed by a high R/FR light. Rapidly down-regulated after seedling deetiolation.</text>
</comment>
<comment type="sequence caution" evidence="16">
    <conflict type="erroneous gene model prediction">
        <sequence resource="EMBL-CDS" id="AAC34226"/>
    </conflict>
</comment>
<organism>
    <name type="scientific">Arabidopsis thaliana</name>
    <name type="common">Mouse-ear cress</name>
    <dbReference type="NCBI Taxonomy" id="3702"/>
    <lineage>
        <taxon>Eukaryota</taxon>
        <taxon>Viridiplantae</taxon>
        <taxon>Streptophyta</taxon>
        <taxon>Embryophyta</taxon>
        <taxon>Tracheophyta</taxon>
        <taxon>Spermatophyta</taxon>
        <taxon>Magnoliopsida</taxon>
        <taxon>eudicotyledons</taxon>
        <taxon>Gunneridae</taxon>
        <taxon>Pentapetalae</taxon>
        <taxon>rosids</taxon>
        <taxon>malvids</taxon>
        <taxon>Brassicales</taxon>
        <taxon>Brassicaceae</taxon>
        <taxon>Camelineae</taxon>
        <taxon>Arabidopsis</taxon>
    </lineage>
</organism>
<accession>Q8L5W8</accession>
<accession>O80727</accession>
<accession>Q84WY4</accession>
<proteinExistence type="evidence at protein level"/>
<feature type="chain" id="PRO_0000358853" description="Transcription factor PIL1">
    <location>
        <begin position="1"/>
        <end position="416"/>
    </location>
</feature>
<feature type="domain" description="bHLH" evidence="3">
    <location>
        <begin position="229"/>
        <end position="278"/>
    </location>
</feature>
<feature type="region of interest" description="Disordered" evidence="4">
    <location>
        <begin position="1"/>
        <end position="24"/>
    </location>
</feature>
<feature type="region of interest" description="Disordered" evidence="4">
    <location>
        <begin position="89"/>
        <end position="113"/>
    </location>
</feature>
<feature type="region of interest" description="Disordered" evidence="4">
    <location>
        <begin position="197"/>
        <end position="231"/>
    </location>
</feature>
<feature type="coiled-coil region" evidence="2">
    <location>
        <begin position="95"/>
        <end position="124"/>
    </location>
</feature>
<feature type="compositionally biased region" description="Low complexity" evidence="4">
    <location>
        <begin position="8"/>
        <end position="22"/>
    </location>
</feature>
<feature type="compositionally biased region" description="Basic residues" evidence="4">
    <location>
        <begin position="216"/>
        <end position="229"/>
    </location>
</feature>
<feature type="sequence conflict" description="In Ref. 4; AAO37214." evidence="16" ref="4">
    <original>H</original>
    <variation>K</variation>
    <location>
        <position position="302"/>
    </location>
</feature>
<reference key="1">
    <citation type="journal article" date="2002" name="Plant Cell Physiol.">
        <title>The APRR1/TOC1 quintet implicated in circadian rhythms of Arabidopsis thaliana: I. Characterization with APRR1-overexpressing plants.</title>
        <authorList>
            <person name="Makino S."/>
            <person name="Matsushika A."/>
            <person name="Kojima M."/>
            <person name="Yamashino T."/>
            <person name="Mizuno T."/>
        </authorList>
    </citation>
    <scope>NUCLEOTIDE SEQUENCE [MRNA]</scope>
    <scope>INTERACTION WITH APRR1/TOC1</scope>
</reference>
<reference key="2">
    <citation type="journal article" date="1999" name="Nature">
        <title>Sequence and analysis of chromosome 2 of the plant Arabidopsis thaliana.</title>
        <authorList>
            <person name="Lin X."/>
            <person name="Kaul S."/>
            <person name="Rounsley S.D."/>
            <person name="Shea T.P."/>
            <person name="Benito M.-I."/>
            <person name="Town C.D."/>
            <person name="Fujii C.Y."/>
            <person name="Mason T.M."/>
            <person name="Bowman C.L."/>
            <person name="Barnstead M.E."/>
            <person name="Feldblyum T.V."/>
            <person name="Buell C.R."/>
            <person name="Ketchum K.A."/>
            <person name="Lee J.J."/>
            <person name="Ronning C.M."/>
            <person name="Koo H.L."/>
            <person name="Moffat K.S."/>
            <person name="Cronin L.A."/>
            <person name="Shen M."/>
            <person name="Pai G."/>
            <person name="Van Aken S."/>
            <person name="Umayam L."/>
            <person name="Tallon L.J."/>
            <person name="Gill J.E."/>
            <person name="Adams M.D."/>
            <person name="Carrera A.J."/>
            <person name="Creasy T.H."/>
            <person name="Goodman H.M."/>
            <person name="Somerville C.R."/>
            <person name="Copenhaver G.P."/>
            <person name="Preuss D."/>
            <person name="Nierman W.C."/>
            <person name="White O."/>
            <person name="Eisen J.A."/>
            <person name="Salzberg S.L."/>
            <person name="Fraser C.M."/>
            <person name="Venter J.C."/>
        </authorList>
    </citation>
    <scope>NUCLEOTIDE SEQUENCE [LARGE SCALE GENOMIC DNA]</scope>
    <source>
        <strain>cv. Columbia</strain>
    </source>
</reference>
<reference key="3">
    <citation type="journal article" date="2017" name="Plant J.">
        <title>Araport11: a complete reannotation of the Arabidopsis thaliana reference genome.</title>
        <authorList>
            <person name="Cheng C.Y."/>
            <person name="Krishnakumar V."/>
            <person name="Chan A.P."/>
            <person name="Thibaud-Nissen F."/>
            <person name="Schobel S."/>
            <person name="Town C.D."/>
        </authorList>
    </citation>
    <scope>GENOME REANNOTATION</scope>
    <source>
        <strain>cv. Columbia</strain>
    </source>
</reference>
<reference key="4">
    <citation type="journal article" date="2002" name="Plant Physiol.">
        <title>Cloning and sequencing of cDNAs for hypothetical genes from chromosome 2 of Arabidopsis.</title>
        <authorList>
            <person name="Xiao Y.-L."/>
            <person name="Malik M."/>
            <person name="Whitelaw C.A."/>
            <person name="Town C.D."/>
        </authorList>
    </citation>
    <scope>NUCLEOTIDE SEQUENCE [LARGE SCALE MRNA]</scope>
    <source>
        <strain>cv. Columbia</strain>
    </source>
</reference>
<reference key="5">
    <citation type="submission" date="2005-03" db="EMBL/GenBank/DDBJ databases">
        <authorList>
            <person name="Underwood B.A."/>
            <person name="Xiao Y.-L."/>
            <person name="Moskal W.A. Jr."/>
            <person name="Monaghan E.L."/>
            <person name="Wang W."/>
            <person name="Redman J.C."/>
            <person name="Wu H.C."/>
            <person name="Utterback T."/>
            <person name="Town C.D."/>
        </authorList>
    </citation>
    <scope>NUCLEOTIDE SEQUENCE [LARGE SCALE MRNA]</scope>
    <source>
        <strain>cv. Columbia</strain>
    </source>
</reference>
<reference key="6">
    <citation type="journal article" date="2003" name="Mol. Biol. Evol.">
        <title>The basic helix-loop-helix transcription factor family in plants: a genome-wide study of protein structure and functional diversity.</title>
        <authorList>
            <person name="Heim M.A."/>
            <person name="Jakoby M."/>
            <person name="Werber M."/>
            <person name="Martin C."/>
            <person name="Weisshaar B."/>
            <person name="Bailey P.C."/>
        </authorList>
    </citation>
    <scope>GENE FAMILY</scope>
    <scope>NOMENCLATURE</scope>
</reference>
<reference key="7">
    <citation type="journal article" date="2003" name="Nature">
        <title>Gating of the rapid shade-avoidance response by the circadian clock in plants.</title>
        <authorList>
            <person name="Salter M.G."/>
            <person name="Franklin K.A."/>
            <person name="Whitelam G.C."/>
        </authorList>
    </citation>
    <scope>FUNCTION</scope>
    <scope>INDUCTION</scope>
</reference>
<reference key="8">
    <citation type="journal article" date="2003" name="Plant Cell">
        <title>The Arabidopsis basic/helix-loop-helix transcription factor family.</title>
        <authorList>
            <person name="Toledo-Ortiz G."/>
            <person name="Huq E."/>
            <person name="Quail P.H."/>
        </authorList>
    </citation>
    <scope>GENE FAMILY</scope>
</reference>
<reference key="9">
    <citation type="journal article" date="2003" name="Plant Cell">
        <title>Update on the basic helix-loop-helix transcription factor gene family in Arabidopsis thaliana.</title>
        <authorList>
            <person name="Bailey P.C."/>
            <person name="Martin C."/>
            <person name="Toledo-Ortiz G."/>
            <person name="Quail P.H."/>
            <person name="Huq E."/>
            <person name="Heim M.A."/>
            <person name="Jakoby M."/>
            <person name="Werber M."/>
            <person name="Weisshaar B."/>
        </authorList>
    </citation>
    <scope>GENE FAMILY</scope>
    <scope>NOMENCLATURE</scope>
</reference>
<reference key="10">
    <citation type="journal article" date="2003" name="Plant Cell Physiol.">
        <title>A link between circadian-controlled bHLH factors and the APRR1/TOC1 quintet in Arabidopsis thaliana.</title>
        <authorList>
            <person name="Yamashino T."/>
            <person name="Matsushika A."/>
            <person name="Fujimori T."/>
            <person name="Sato S."/>
            <person name="Kato T."/>
            <person name="Tabata S."/>
            <person name="Mizuno T."/>
        </authorList>
    </citation>
    <scope>INTERACTION WITH APRR1/TOC1</scope>
    <scope>TISSUE SPECIFICITY</scope>
</reference>
<reference key="11">
    <citation type="journal article" date="2006" name="Plant Cell">
        <title>Functional profiling reveals that only a small number of phytochrome-regulated early-response genes in Arabidopsis are necessary for optimal deetiolation.</title>
        <authorList>
            <person name="Khanna R."/>
            <person name="Shen Y."/>
            <person name="Toledo-Ortiz G."/>
            <person name="Kikis E.A."/>
            <person name="Johannesson H."/>
            <person name="Hwang Y.-S."/>
            <person name="Quail P.H."/>
        </authorList>
    </citation>
    <scope>FUNCTION</scope>
    <scope>SUBCELLULAR LOCATION</scope>
    <scope>INDUCTION</scope>
</reference>
<reference key="12">
    <citation type="journal article" date="2006" name="Plant Physiol.">
        <title>Identification of primary target genes of phytochrome signaling. Early transcriptional control during shade avoidance responses in Arabidopsis.</title>
        <authorList>
            <person name="Roig-Villanova I."/>
            <person name="Bou J."/>
            <person name="Sorin C."/>
            <person name="Devlin P.F."/>
            <person name="Martinez-Garcia J.F."/>
        </authorList>
    </citation>
    <scope>FUNCTION</scope>
    <scope>INDUCTION BY FAR-RED LIGHT</scope>
</reference>
<reference key="13">
    <citation type="journal article" date="2013" name="Mol. Cells">
        <title>Phytochrome-interacting factors have both shared and distinct biological roles.</title>
        <authorList>
            <person name="Jeong J."/>
            <person name="Choi G."/>
        </authorList>
    </citation>
    <scope>TISSUE SPECIFICITY</scope>
    <scope>REVIEW</scope>
</reference>
<reference key="14">
    <citation type="journal article" date="2015" name="Plant Cell">
        <title>HEMERA couples the proteolysis and transcriptional activity of PHYTOCHROME INTERACTING FACTORs in Arabidopsis photomorphogenesis.</title>
        <authorList>
            <person name="Qiu Y."/>
            <person name="Li M."/>
            <person name="Pasoreck E.K."/>
            <person name="Long L."/>
            <person name="Shi Y."/>
            <person name="Galvao R.M."/>
            <person name="Chou C.L."/>
            <person name="Wang H."/>
            <person name="Sun A.Y."/>
            <person name="Zhang Y.C."/>
            <person name="Jiang A."/>
            <person name="Chen M."/>
        </authorList>
    </citation>
    <scope>INTERACTION WITH PTAC12/HMR/PAP5</scope>
    <source>
        <strain>cv. Columbia</strain>
    </source>
</reference>
<name>PIL1_ARATH</name>